<protein>
    <recommendedName>
        <fullName>WD repeat-containing protein fzy-1</fullName>
    </recommendedName>
    <alternativeName>
        <fullName evidence="5">CDC20 protein family homolog 1</fullName>
    </alternativeName>
    <alternativeName>
        <fullName>Fizzy protein 1</fullName>
    </alternativeName>
</protein>
<keyword id="KW-0131">Cell cycle</keyword>
<keyword id="KW-0132">Cell division</keyword>
<keyword id="KW-0158">Chromosome</keyword>
<keyword id="KW-0963">Cytoplasm</keyword>
<keyword id="KW-0469">Meiosis</keyword>
<keyword id="KW-0498">Mitosis</keyword>
<keyword id="KW-1185">Reference proteome</keyword>
<keyword id="KW-0677">Repeat</keyword>
<keyword id="KW-0853">WD repeat</keyword>
<name>FZY1_CAEEL</name>
<feature type="chain" id="PRO_0000051003" description="WD repeat-containing protein fzy-1">
    <location>
        <begin position="1"/>
        <end position="507"/>
    </location>
</feature>
<feature type="repeat" description="WD 1">
    <location>
        <begin position="219"/>
        <end position="258"/>
    </location>
</feature>
<feature type="repeat" description="WD 2">
    <location>
        <begin position="313"/>
        <end position="352"/>
    </location>
</feature>
<feature type="repeat" description="WD 3">
    <location>
        <begin position="364"/>
        <end position="406"/>
    </location>
</feature>
<feature type="repeat" description="WD 4">
    <location>
        <begin position="411"/>
        <end position="450"/>
    </location>
</feature>
<feature type="region of interest" description="Disordered" evidence="1">
    <location>
        <begin position="1"/>
        <end position="39"/>
    </location>
</feature>
<feature type="region of interest" description="Disordered" evidence="1">
    <location>
        <begin position="74"/>
        <end position="95"/>
    </location>
</feature>
<feature type="compositionally biased region" description="Polar residues" evidence="1">
    <location>
        <begin position="15"/>
        <end position="24"/>
    </location>
</feature>
<feature type="compositionally biased region" description="Polar residues" evidence="1">
    <location>
        <begin position="74"/>
        <end position="86"/>
    </location>
</feature>
<feature type="mutagenesis site" description="In h1983; reduction in the number of eggs laid." evidence="3">
    <original>D</original>
    <variation>N</variation>
    <location>
        <position position="433"/>
    </location>
</feature>
<comment type="function">
    <text evidence="2 3">Plays a role in metaphase-anaphase transition during meiosis I (PubMed:12498686). Required for embryonic anterior-posterior axis formation (PubMed:11832245).</text>
</comment>
<comment type="subcellular location">
    <subcellularLocation>
        <location evidence="3">Chromosome</location>
    </subcellularLocation>
    <subcellularLocation>
        <location evidence="3">Cytoplasm</location>
    </subcellularLocation>
    <text evidence="3">At prometaphase, localizes around condensed chromosomes. At metaphase, localizes along chromosomes, dissociates from the sister chromatid after separation and localizes to the cytoplasm at anaphase and interphase.</text>
</comment>
<comment type="developmental stage">
    <text evidence="3">Expressed in oocytes at the prometaphase and metaphase of meiosis I (at protein level). Expressed in early embryo at the prometaphase and metaphase of mitosis (at protein level).</text>
</comment>
<comment type="disruption phenotype">
    <text evidence="2 3">RNAi-mediated knockdown causes embryonic lethality (PubMed:12498686). Embryos are arrested at the metaphase-anaphase transition of meiosis I and lack formation of polar bodies (PubMed:12498686). In addition, causes a loss of asymmetric cell division and par-2 mislocalization in the one-cell embryo followed by an arrest at the one-cell stage (PubMed:11832245).</text>
</comment>
<comment type="similarity">
    <text evidence="5">Belongs to the WD repeat CDC20/Fizzy family.</text>
</comment>
<evidence type="ECO:0000256" key="1">
    <source>
        <dbReference type="SAM" id="MobiDB-lite"/>
    </source>
</evidence>
<evidence type="ECO:0000269" key="2">
    <source>
    </source>
</evidence>
<evidence type="ECO:0000269" key="3">
    <source>
    </source>
</evidence>
<evidence type="ECO:0000303" key="4">
    <source>
    </source>
</evidence>
<evidence type="ECO:0000305" key="5"/>
<evidence type="ECO:0000312" key="6">
    <source>
        <dbReference type="WormBase" id="ZK177.6"/>
    </source>
</evidence>
<gene>
    <name evidence="4" type="primary">fzy-1</name>
    <name evidence="6" type="ORF">ZK177.6</name>
</gene>
<proteinExistence type="evidence at protein level"/>
<dbReference type="EMBL" id="FO080583">
    <property type="protein sequence ID" value="CCD64859.1"/>
    <property type="molecule type" value="Genomic_DNA"/>
</dbReference>
<dbReference type="PIR" id="T27761">
    <property type="entry name" value="T27761"/>
</dbReference>
<dbReference type="RefSeq" id="NP_495051.1">
    <property type="nucleotide sequence ID" value="NM_062650.8"/>
</dbReference>
<dbReference type="SMR" id="Q09373"/>
<dbReference type="BioGRID" id="57344">
    <property type="interactions" value="4"/>
</dbReference>
<dbReference type="FunCoup" id="Q09373">
    <property type="interactions" value="1567"/>
</dbReference>
<dbReference type="IntAct" id="Q09373">
    <property type="interactions" value="2"/>
</dbReference>
<dbReference type="STRING" id="6239.ZK177.6.1"/>
<dbReference type="iPTMnet" id="Q09373"/>
<dbReference type="PaxDb" id="6239-ZK177.6"/>
<dbReference type="PeptideAtlas" id="Q09373"/>
<dbReference type="EnsemblMetazoa" id="ZK177.6.1">
    <property type="protein sequence ID" value="ZK177.6.1"/>
    <property type="gene ID" value="WBGene00001511"/>
</dbReference>
<dbReference type="EnsemblMetazoa" id="ZK177.6.2">
    <property type="protein sequence ID" value="ZK177.6.2"/>
    <property type="gene ID" value="WBGene00001511"/>
</dbReference>
<dbReference type="GeneID" id="266859"/>
<dbReference type="KEGG" id="cel:CELE_ZK177.6"/>
<dbReference type="UCSC" id="ZK177.6">
    <property type="organism name" value="c. elegans"/>
</dbReference>
<dbReference type="AGR" id="WB:WBGene00001511"/>
<dbReference type="CTD" id="266859"/>
<dbReference type="WormBase" id="ZK177.6">
    <property type="protein sequence ID" value="CE26338"/>
    <property type="gene ID" value="WBGene00001511"/>
    <property type="gene designation" value="fzy-1"/>
</dbReference>
<dbReference type="eggNOG" id="KOG0305">
    <property type="taxonomic scope" value="Eukaryota"/>
</dbReference>
<dbReference type="GeneTree" id="ENSGT00950000183104"/>
<dbReference type="HOGENOM" id="CLU_041348_0_0_1"/>
<dbReference type="InParanoid" id="Q09373"/>
<dbReference type="OMA" id="NTETCVI"/>
<dbReference type="OrthoDB" id="10263272at2759"/>
<dbReference type="PhylomeDB" id="Q09373"/>
<dbReference type="Reactome" id="R-CEL-141405">
    <property type="pathway name" value="Inhibition of the proteolytic activity of APC/C required for the onset of anaphase by mitotic spindle checkpoint components"/>
</dbReference>
<dbReference type="Reactome" id="R-CEL-141430">
    <property type="pathway name" value="Inactivation of APC/C via direct inhibition of the APC/C complex"/>
</dbReference>
<dbReference type="Reactome" id="R-CEL-5689880">
    <property type="pathway name" value="Ub-specific processing proteases"/>
</dbReference>
<dbReference type="Reactome" id="R-CEL-983168">
    <property type="pathway name" value="Antigen processing: Ubiquitination &amp; Proteasome degradation"/>
</dbReference>
<dbReference type="PRO" id="PR:Q09373"/>
<dbReference type="Proteomes" id="UP000001940">
    <property type="component" value="Chromosome II"/>
</dbReference>
<dbReference type="Bgee" id="WBGene00001511">
    <property type="expression patterns" value="Expressed in embryo and 4 other cell types or tissues"/>
</dbReference>
<dbReference type="GO" id="GO:0005680">
    <property type="term" value="C:anaphase-promoting complex"/>
    <property type="evidence" value="ECO:0000318"/>
    <property type="project" value="GO_Central"/>
</dbReference>
<dbReference type="GO" id="GO:0000793">
    <property type="term" value="C:condensed chromosome"/>
    <property type="evidence" value="ECO:0000314"/>
    <property type="project" value="WormBase"/>
</dbReference>
<dbReference type="GO" id="GO:0005737">
    <property type="term" value="C:cytoplasm"/>
    <property type="evidence" value="ECO:0000314"/>
    <property type="project" value="WormBase"/>
</dbReference>
<dbReference type="GO" id="GO:0010997">
    <property type="term" value="F:anaphase-promoting complex binding"/>
    <property type="evidence" value="ECO:0000318"/>
    <property type="project" value="GO_Central"/>
</dbReference>
<dbReference type="GO" id="GO:1990757">
    <property type="term" value="F:ubiquitin ligase activator activity"/>
    <property type="evidence" value="ECO:0000318"/>
    <property type="project" value="GO_Central"/>
</dbReference>
<dbReference type="GO" id="GO:0031145">
    <property type="term" value="P:anaphase-promoting complex-dependent catabolic process"/>
    <property type="evidence" value="ECO:0000318"/>
    <property type="project" value="GO_Central"/>
</dbReference>
<dbReference type="GO" id="GO:0008356">
    <property type="term" value="P:asymmetric cell division"/>
    <property type="evidence" value="ECO:0000315"/>
    <property type="project" value="UniProtKB"/>
</dbReference>
<dbReference type="GO" id="GO:1990949">
    <property type="term" value="P:metaphase/anaphase transition of meiosis I"/>
    <property type="evidence" value="ECO:0000315"/>
    <property type="project" value="UniProtKB"/>
</dbReference>
<dbReference type="GO" id="GO:0040038">
    <property type="term" value="P:polar body extrusion after meiotic divisions"/>
    <property type="evidence" value="ECO:0000315"/>
    <property type="project" value="UniProtKB"/>
</dbReference>
<dbReference type="GO" id="GO:0009949">
    <property type="term" value="P:polarity specification of anterior/posterior axis"/>
    <property type="evidence" value="ECO:0000315"/>
    <property type="project" value="UniProtKB"/>
</dbReference>
<dbReference type="GO" id="GO:1905786">
    <property type="term" value="P:positive regulation of anaphase-promoting complex-dependent catabolic process"/>
    <property type="evidence" value="ECO:0000318"/>
    <property type="project" value="GO_Central"/>
</dbReference>
<dbReference type="FunFam" id="2.130.10.10:FF:001258">
    <property type="entry name" value="WD repeat-containing protein fzy-1"/>
    <property type="match status" value="1"/>
</dbReference>
<dbReference type="Gene3D" id="2.130.10.10">
    <property type="entry name" value="YVTN repeat-like/Quinoprotein amine dehydrogenase"/>
    <property type="match status" value="1"/>
</dbReference>
<dbReference type="InterPro" id="IPR033010">
    <property type="entry name" value="Cdc20/Fizzy"/>
</dbReference>
<dbReference type="InterPro" id="IPR015943">
    <property type="entry name" value="WD40/YVTN_repeat-like_dom_sf"/>
</dbReference>
<dbReference type="InterPro" id="IPR056150">
    <property type="entry name" value="WD40_CDC20-Fz"/>
</dbReference>
<dbReference type="InterPro" id="IPR036322">
    <property type="entry name" value="WD40_repeat_dom_sf"/>
</dbReference>
<dbReference type="InterPro" id="IPR001680">
    <property type="entry name" value="WD40_rpt"/>
</dbReference>
<dbReference type="PANTHER" id="PTHR19918">
    <property type="entry name" value="CELL DIVISION CYCLE 20 CDC20 FIZZY -RELATED"/>
    <property type="match status" value="1"/>
</dbReference>
<dbReference type="PANTHER" id="PTHR19918:SF8">
    <property type="entry name" value="FI02843P"/>
    <property type="match status" value="1"/>
</dbReference>
<dbReference type="Pfam" id="PF24807">
    <property type="entry name" value="WD40_CDC20-Fz"/>
    <property type="match status" value="1"/>
</dbReference>
<dbReference type="SMART" id="SM00320">
    <property type="entry name" value="WD40"/>
    <property type="match status" value="5"/>
</dbReference>
<dbReference type="SUPFAM" id="SSF50978">
    <property type="entry name" value="WD40 repeat-like"/>
    <property type="match status" value="1"/>
</dbReference>
<dbReference type="PROSITE" id="PS00678">
    <property type="entry name" value="WD_REPEATS_1"/>
    <property type="match status" value="2"/>
</dbReference>
<dbReference type="PROSITE" id="PS50082">
    <property type="entry name" value="WD_REPEATS_2"/>
    <property type="match status" value="1"/>
</dbReference>
<dbReference type="PROSITE" id="PS50294">
    <property type="entry name" value="WD_REPEATS_REGION"/>
    <property type="match status" value="1"/>
</dbReference>
<organism>
    <name type="scientific">Caenorhabditis elegans</name>
    <dbReference type="NCBI Taxonomy" id="6239"/>
    <lineage>
        <taxon>Eukaryota</taxon>
        <taxon>Metazoa</taxon>
        <taxon>Ecdysozoa</taxon>
        <taxon>Nematoda</taxon>
        <taxon>Chromadorea</taxon>
        <taxon>Rhabditida</taxon>
        <taxon>Rhabditina</taxon>
        <taxon>Rhabditomorpha</taxon>
        <taxon>Rhabditoidea</taxon>
        <taxon>Rhabditidae</taxon>
        <taxon>Peloderinae</taxon>
        <taxon>Caenorhabditis</taxon>
    </lineage>
</organism>
<accession>Q09373</accession>
<accession>Q09661</accession>
<reference key="1">
    <citation type="journal article" date="1998" name="Science">
        <title>Genome sequence of the nematode C. elegans: a platform for investigating biology.</title>
        <authorList>
            <consortium name="The C. elegans sequencing consortium"/>
        </authorList>
    </citation>
    <scope>NUCLEOTIDE SEQUENCE [LARGE SCALE GENOMIC DNA]</scope>
    <source>
        <strain>Bristol N2</strain>
    </source>
</reference>
<reference key="2">
    <citation type="journal article" date="2002" name="Curr. Biol.">
        <title>The Cdc20 homolog, FZY-1, and its interacting protein, IFY-1, are required for proper chromosome segregation in Caenorhabditis elegans.</title>
        <authorList>
            <person name="Kitagawa R."/>
            <person name="Law E."/>
            <person name="Tang L."/>
            <person name="Rose A.M."/>
        </authorList>
    </citation>
    <scope>FUNCTION</scope>
    <scope>SUBCELLULAR LOCATION</scope>
    <scope>DEVELOPMENTAL STAGE</scope>
    <scope>DISRUPTION PHENOTYPE</scope>
    <scope>MUTAGENESIS OF ASP-433</scope>
</reference>
<reference key="3">
    <citation type="journal article" date="2002" name="Dev. Cell">
        <title>The anaphase-promoting complex and separin are required for embryonic anterior-posterior axis formation.</title>
        <authorList>
            <person name="Rappleye C.A."/>
            <person name="Tagawa A."/>
            <person name="Lyczak R."/>
            <person name="Bowerman B."/>
            <person name="Aroian R.V."/>
        </authorList>
    </citation>
    <scope>FUNCTION</scope>
    <scope>DISRUPTION PHENOTYPE</scope>
</reference>
<sequence length="507" mass="56384">MNNKGRTPGSAGRTVRSSAQQNGLTMRKRDMTPTRNTNLLPNATFVGDRFLGVRLDQDELDHANHLMTSKLYSNKENLNNSMSEPNSPEKKSVEGEALKQMMRHKSTGALTDADDGDRILCYKKNLAPPPAIGYINQAKVLYSTNSVINPASSVKKSTRHVKETATKVLDGPGLTKDLYSRHLDWGCHNWVAVALGHELYLWNTETCVIKNLFEDNAPTNEGLITSVRWSQEGRYISLGYASGAVKIYDPNRPKTTEYVRELRTLRVGGASRCASIAWRKQGVMTCGYKSGDIVNHDVRISQHVVSSWGGDNGHCRDVTALEWSADENMCVSGSSDRTAKIWDGRHVRGSTVIQDPEPMFTIDEHTGQVRTAQFCSFRDGILATGGGINDGTVKLWDVKRQFQKVRELNVCETGGVGGIVFNRPYSEMLTASDDGFLRIYRFNANYKLSHEIQASNEPIMDLVGSPFDEVLIGDMEETLKVFQLFNVDKSTNILDRTAPKNVGLNVR</sequence>